<name>F16P2_PEA</name>
<reference key="1">
    <citation type="submission" date="2002-03" db="EMBL/GenBank/DDBJ databases">
        <authorList>
            <person name="Hahn T.-R."/>
            <person name="Son T.-J."/>
            <person name="Jang H.-K."/>
            <person name="Lee S.-W."/>
        </authorList>
    </citation>
    <scope>NUCLEOTIDE SEQUENCE [MRNA]</scope>
</reference>
<sequence>MDHAGDAMRTDLMTITRYVLNEQSKRPESRGDFTILLSHIVLGCKFVCSAVNKAGLAKLIGLAGETNIQGEEQKKLDVLSNEVFVKALTSSGRTCILVSEEDEEATFIEPSLRGKYCVVFDPLDGSFNIDCGVSIGTIFGIYMVKDFETATLEDVLQPGKNMVAAGYCMYGSSCTLVLSTGSGVNGFTLDPSLGEYILTHPDIKIPNKGKIYSVNEGNAKNWDGPTTKYVEKCKFPTDGSSPKSLRYIESMVANVHRTLLYGGIFLYPGDKKSPNGKLRVLYEVFPMSFLMEQAGGQAFTGKQRALDLIPTKIHERSPVFLGSYDDVEDIKALYAAQEKTA</sequence>
<comment type="catalytic activity">
    <reaction>
        <text>beta-D-fructose 1,6-bisphosphate + H2O = beta-D-fructose 6-phosphate + phosphate</text>
        <dbReference type="Rhea" id="RHEA:11064"/>
        <dbReference type="ChEBI" id="CHEBI:15377"/>
        <dbReference type="ChEBI" id="CHEBI:32966"/>
        <dbReference type="ChEBI" id="CHEBI:43474"/>
        <dbReference type="ChEBI" id="CHEBI:57634"/>
        <dbReference type="EC" id="3.1.3.11"/>
    </reaction>
</comment>
<comment type="cofactor">
    <cofactor evidence="1">
        <name>Mg(2+)</name>
        <dbReference type="ChEBI" id="CHEBI:18420"/>
    </cofactor>
    <text evidence="1">Binds 3 Mg(2+) ions per subunit.</text>
</comment>
<comment type="subcellular location">
    <subcellularLocation>
        <location evidence="1">Cytoplasm</location>
    </subcellularLocation>
</comment>
<comment type="miscellaneous">
    <text>In plants there are two FBPase isozymes: one in the cytosol and the other in the chloroplast.</text>
</comment>
<comment type="similarity">
    <text evidence="2">Belongs to the FBPase class 1 family.</text>
</comment>
<evidence type="ECO:0000250" key="1"/>
<evidence type="ECO:0000305" key="2"/>
<feature type="chain" id="PRO_0000200518" description="Fructose-1,6-bisphosphatase, cytosolic">
    <location>
        <begin position="1"/>
        <end position="341"/>
    </location>
</feature>
<feature type="binding site" evidence="1">
    <location>
        <position position="71"/>
    </location>
    <ligand>
        <name>Mg(2+)</name>
        <dbReference type="ChEBI" id="CHEBI:18420"/>
        <label>1</label>
    </ligand>
</feature>
<feature type="binding site" evidence="1">
    <location>
        <position position="100"/>
    </location>
    <ligand>
        <name>Mg(2+)</name>
        <dbReference type="ChEBI" id="CHEBI:18420"/>
        <label>1</label>
    </ligand>
</feature>
<feature type="binding site" evidence="1">
    <location>
        <position position="100"/>
    </location>
    <ligand>
        <name>Mg(2+)</name>
        <dbReference type="ChEBI" id="CHEBI:18420"/>
        <label>2</label>
    </ligand>
</feature>
<feature type="binding site" evidence="1">
    <location>
        <position position="121"/>
    </location>
    <ligand>
        <name>Mg(2+)</name>
        <dbReference type="ChEBI" id="CHEBI:18420"/>
        <label>2</label>
    </ligand>
</feature>
<feature type="binding site" evidence="1">
    <location>
        <position position="121"/>
    </location>
    <ligand>
        <name>Mg(2+)</name>
        <dbReference type="ChEBI" id="CHEBI:18420"/>
        <label>3</label>
    </ligand>
</feature>
<feature type="binding site" evidence="1">
    <location>
        <position position="123"/>
    </location>
    <ligand>
        <name>Mg(2+)</name>
        <dbReference type="ChEBI" id="CHEBI:18420"/>
        <label>2</label>
    </ligand>
</feature>
<feature type="binding site" evidence="1">
    <location>
        <begin position="124"/>
        <end position="127"/>
    </location>
    <ligand>
        <name>substrate</name>
    </ligand>
</feature>
<feature type="binding site" evidence="1">
    <location>
        <position position="124"/>
    </location>
    <ligand>
        <name>Mg(2+)</name>
        <dbReference type="ChEBI" id="CHEBI:18420"/>
        <label>3</label>
    </ligand>
</feature>
<feature type="binding site" evidence="1">
    <location>
        <position position="215"/>
    </location>
    <ligand>
        <name>substrate</name>
    </ligand>
</feature>
<feature type="binding site" evidence="1">
    <location>
        <position position="247"/>
    </location>
    <ligand>
        <name>substrate</name>
    </ligand>
</feature>
<feature type="binding site" evidence="1">
    <location>
        <position position="267"/>
    </location>
    <ligand>
        <name>substrate</name>
    </ligand>
</feature>
<feature type="binding site" evidence="1">
    <location>
        <position position="277"/>
    </location>
    <ligand>
        <name>substrate</name>
    </ligand>
</feature>
<feature type="binding site" evidence="1">
    <location>
        <position position="283"/>
    </location>
    <ligand>
        <name>Mg(2+)</name>
        <dbReference type="ChEBI" id="CHEBI:18420"/>
        <label>3</label>
    </ligand>
</feature>
<accession>Q8RW99</accession>
<dbReference type="EC" id="3.1.3.11"/>
<dbReference type="EMBL" id="AY093594">
    <property type="protein sequence ID" value="AAM14744.1"/>
    <property type="molecule type" value="mRNA"/>
</dbReference>
<dbReference type="SMR" id="Q8RW99"/>
<dbReference type="BRENDA" id="3.1.3.11">
    <property type="organism ID" value="4872"/>
</dbReference>
<dbReference type="SABIO-RK" id="Q8RW99"/>
<dbReference type="GO" id="GO:0005829">
    <property type="term" value="C:cytosol"/>
    <property type="evidence" value="ECO:0007669"/>
    <property type="project" value="TreeGrafter"/>
</dbReference>
<dbReference type="GO" id="GO:0042132">
    <property type="term" value="F:fructose 1,6-bisphosphate 1-phosphatase activity"/>
    <property type="evidence" value="ECO:0007669"/>
    <property type="project" value="UniProtKB-EC"/>
</dbReference>
<dbReference type="GO" id="GO:0046872">
    <property type="term" value="F:metal ion binding"/>
    <property type="evidence" value="ECO:0007669"/>
    <property type="project" value="UniProtKB-KW"/>
</dbReference>
<dbReference type="GO" id="GO:0030388">
    <property type="term" value="P:fructose 1,6-bisphosphate metabolic process"/>
    <property type="evidence" value="ECO:0007669"/>
    <property type="project" value="TreeGrafter"/>
</dbReference>
<dbReference type="GO" id="GO:0006002">
    <property type="term" value="P:fructose 6-phosphate metabolic process"/>
    <property type="evidence" value="ECO:0007669"/>
    <property type="project" value="TreeGrafter"/>
</dbReference>
<dbReference type="GO" id="GO:0006000">
    <property type="term" value="P:fructose metabolic process"/>
    <property type="evidence" value="ECO:0007669"/>
    <property type="project" value="TreeGrafter"/>
</dbReference>
<dbReference type="GO" id="GO:0006094">
    <property type="term" value="P:gluconeogenesis"/>
    <property type="evidence" value="ECO:0007669"/>
    <property type="project" value="TreeGrafter"/>
</dbReference>
<dbReference type="GO" id="GO:0005986">
    <property type="term" value="P:sucrose biosynthetic process"/>
    <property type="evidence" value="ECO:0007669"/>
    <property type="project" value="TreeGrafter"/>
</dbReference>
<dbReference type="CDD" id="cd00354">
    <property type="entry name" value="FBPase"/>
    <property type="match status" value="1"/>
</dbReference>
<dbReference type="FunFam" id="3.40.190.80:FF:000001">
    <property type="entry name" value="Fructose-1,6-bisphosphatase class 1"/>
    <property type="match status" value="1"/>
</dbReference>
<dbReference type="FunFam" id="3.30.540.10:FF:000008">
    <property type="entry name" value="Fructose-1,6-bisphosphatase, cytosolic"/>
    <property type="match status" value="1"/>
</dbReference>
<dbReference type="Gene3D" id="3.40.190.80">
    <property type="match status" value="1"/>
</dbReference>
<dbReference type="Gene3D" id="3.30.540.10">
    <property type="entry name" value="Fructose-1,6-Bisphosphatase, subunit A, domain 1"/>
    <property type="match status" value="1"/>
</dbReference>
<dbReference type="HAMAP" id="MF_01855">
    <property type="entry name" value="FBPase_class1"/>
    <property type="match status" value="1"/>
</dbReference>
<dbReference type="InterPro" id="IPR044015">
    <property type="entry name" value="FBPase_C_dom"/>
</dbReference>
<dbReference type="InterPro" id="IPR000146">
    <property type="entry name" value="FBPase_class-1"/>
</dbReference>
<dbReference type="InterPro" id="IPR033391">
    <property type="entry name" value="FBPase_N"/>
</dbReference>
<dbReference type="InterPro" id="IPR028343">
    <property type="entry name" value="FBPtase"/>
</dbReference>
<dbReference type="InterPro" id="IPR020548">
    <property type="entry name" value="Fructose_bisphosphatase_AS"/>
</dbReference>
<dbReference type="NCBIfam" id="NF006778">
    <property type="entry name" value="PRK09293.1-1"/>
    <property type="match status" value="1"/>
</dbReference>
<dbReference type="PANTHER" id="PTHR11556:SF41">
    <property type="entry name" value="FRUCTOSE-1,6-BISPHOSPHATASE, CYTOSOLIC"/>
    <property type="match status" value="1"/>
</dbReference>
<dbReference type="PANTHER" id="PTHR11556">
    <property type="entry name" value="FRUCTOSE-1,6-BISPHOSPHATASE-RELATED"/>
    <property type="match status" value="1"/>
</dbReference>
<dbReference type="Pfam" id="PF00316">
    <property type="entry name" value="FBPase"/>
    <property type="match status" value="1"/>
</dbReference>
<dbReference type="Pfam" id="PF18913">
    <property type="entry name" value="FBPase_C"/>
    <property type="match status" value="1"/>
</dbReference>
<dbReference type="PIRSF" id="PIRSF500210">
    <property type="entry name" value="FBPtase"/>
    <property type="match status" value="1"/>
</dbReference>
<dbReference type="PIRSF" id="PIRSF000904">
    <property type="entry name" value="FBPtase_SBPase"/>
    <property type="match status" value="1"/>
</dbReference>
<dbReference type="PRINTS" id="PR00115">
    <property type="entry name" value="F16BPHPHTASE"/>
</dbReference>
<dbReference type="SUPFAM" id="SSF56655">
    <property type="entry name" value="Carbohydrate phosphatase"/>
    <property type="match status" value="1"/>
</dbReference>
<dbReference type="PROSITE" id="PS00124">
    <property type="entry name" value="FBPASE"/>
    <property type="match status" value="1"/>
</dbReference>
<protein>
    <recommendedName>
        <fullName>Fructose-1,6-bisphosphatase, cytosolic</fullName>
        <shortName>FBPase</shortName>
        <ecNumber>3.1.3.11</ecNumber>
    </recommendedName>
    <alternativeName>
        <fullName>D-fructose-1,6-bisphosphate 1-phosphohydrolase</fullName>
    </alternativeName>
</protein>
<proteinExistence type="evidence at transcript level"/>
<keyword id="KW-0119">Carbohydrate metabolism</keyword>
<keyword id="KW-0963">Cytoplasm</keyword>
<keyword id="KW-0378">Hydrolase</keyword>
<keyword id="KW-0460">Magnesium</keyword>
<keyword id="KW-0479">Metal-binding</keyword>
<organism>
    <name type="scientific">Pisum sativum</name>
    <name type="common">Garden pea</name>
    <name type="synonym">Lathyrus oleraceus</name>
    <dbReference type="NCBI Taxonomy" id="3888"/>
    <lineage>
        <taxon>Eukaryota</taxon>
        <taxon>Viridiplantae</taxon>
        <taxon>Streptophyta</taxon>
        <taxon>Embryophyta</taxon>
        <taxon>Tracheophyta</taxon>
        <taxon>Spermatophyta</taxon>
        <taxon>Magnoliopsida</taxon>
        <taxon>eudicotyledons</taxon>
        <taxon>Gunneridae</taxon>
        <taxon>Pentapetalae</taxon>
        <taxon>rosids</taxon>
        <taxon>fabids</taxon>
        <taxon>Fabales</taxon>
        <taxon>Fabaceae</taxon>
        <taxon>Papilionoideae</taxon>
        <taxon>50 kb inversion clade</taxon>
        <taxon>NPAAA clade</taxon>
        <taxon>Hologalegina</taxon>
        <taxon>IRL clade</taxon>
        <taxon>Fabeae</taxon>
        <taxon>Pisum</taxon>
    </lineage>
</organism>